<comment type="function">
    <text evidence="1">IF-3 binds to the 30S ribosomal subunit and shifts the equilibrium between 70S ribosomes and their 50S and 30S subunits in favor of the free subunits, thus enhancing the availability of 30S subunits on which protein synthesis initiation begins.</text>
</comment>
<comment type="subunit">
    <text evidence="1">Monomer.</text>
</comment>
<comment type="subcellular location">
    <subcellularLocation>
        <location evidence="1">Cytoplasm</location>
    </subcellularLocation>
</comment>
<comment type="similarity">
    <text evidence="1">Belongs to the IF-3 family.</text>
</comment>
<dbReference type="EMBL" id="AJ938182">
    <property type="protein sequence ID" value="CAI81229.1"/>
    <property type="molecule type" value="Genomic_DNA"/>
</dbReference>
<dbReference type="RefSeq" id="WP_001791162.1">
    <property type="nucleotide sequence ID" value="NC_007622.1"/>
</dbReference>
<dbReference type="SMR" id="Q2YTA9"/>
<dbReference type="GeneID" id="66839860"/>
<dbReference type="KEGG" id="sab:SAB1540c"/>
<dbReference type="HOGENOM" id="CLU_054919_3_2_9"/>
<dbReference type="GO" id="GO:0005829">
    <property type="term" value="C:cytosol"/>
    <property type="evidence" value="ECO:0007669"/>
    <property type="project" value="TreeGrafter"/>
</dbReference>
<dbReference type="GO" id="GO:0016020">
    <property type="term" value="C:membrane"/>
    <property type="evidence" value="ECO:0007669"/>
    <property type="project" value="TreeGrafter"/>
</dbReference>
<dbReference type="GO" id="GO:0043022">
    <property type="term" value="F:ribosome binding"/>
    <property type="evidence" value="ECO:0007669"/>
    <property type="project" value="TreeGrafter"/>
</dbReference>
<dbReference type="GO" id="GO:0003743">
    <property type="term" value="F:translation initiation factor activity"/>
    <property type="evidence" value="ECO:0007669"/>
    <property type="project" value="UniProtKB-UniRule"/>
</dbReference>
<dbReference type="GO" id="GO:0032790">
    <property type="term" value="P:ribosome disassembly"/>
    <property type="evidence" value="ECO:0007669"/>
    <property type="project" value="TreeGrafter"/>
</dbReference>
<dbReference type="FunFam" id="3.10.20.80:FF:000001">
    <property type="entry name" value="Translation initiation factor IF-3"/>
    <property type="match status" value="1"/>
</dbReference>
<dbReference type="FunFam" id="3.30.110.10:FF:000001">
    <property type="entry name" value="Translation initiation factor IF-3"/>
    <property type="match status" value="1"/>
</dbReference>
<dbReference type="Gene3D" id="3.30.110.10">
    <property type="entry name" value="Translation initiation factor 3 (IF-3), C-terminal domain"/>
    <property type="match status" value="1"/>
</dbReference>
<dbReference type="Gene3D" id="3.10.20.80">
    <property type="entry name" value="Translation initiation factor 3 (IF-3), N-terminal domain"/>
    <property type="match status" value="1"/>
</dbReference>
<dbReference type="HAMAP" id="MF_00080">
    <property type="entry name" value="IF_3"/>
    <property type="match status" value="1"/>
</dbReference>
<dbReference type="InterPro" id="IPR036788">
    <property type="entry name" value="T_IF-3_C_sf"/>
</dbReference>
<dbReference type="InterPro" id="IPR036787">
    <property type="entry name" value="T_IF-3_N_sf"/>
</dbReference>
<dbReference type="InterPro" id="IPR019813">
    <property type="entry name" value="Translation_initiation_fac3_CS"/>
</dbReference>
<dbReference type="InterPro" id="IPR001288">
    <property type="entry name" value="Translation_initiation_fac_3"/>
</dbReference>
<dbReference type="InterPro" id="IPR019815">
    <property type="entry name" value="Translation_initiation_fac_3_C"/>
</dbReference>
<dbReference type="InterPro" id="IPR019814">
    <property type="entry name" value="Translation_initiation_fac_3_N"/>
</dbReference>
<dbReference type="NCBIfam" id="TIGR00168">
    <property type="entry name" value="infC"/>
    <property type="match status" value="1"/>
</dbReference>
<dbReference type="PANTHER" id="PTHR10938">
    <property type="entry name" value="TRANSLATION INITIATION FACTOR IF-3"/>
    <property type="match status" value="1"/>
</dbReference>
<dbReference type="PANTHER" id="PTHR10938:SF0">
    <property type="entry name" value="TRANSLATION INITIATION FACTOR IF-3, MITOCHONDRIAL"/>
    <property type="match status" value="1"/>
</dbReference>
<dbReference type="Pfam" id="PF00707">
    <property type="entry name" value="IF3_C"/>
    <property type="match status" value="1"/>
</dbReference>
<dbReference type="Pfam" id="PF05198">
    <property type="entry name" value="IF3_N"/>
    <property type="match status" value="1"/>
</dbReference>
<dbReference type="SUPFAM" id="SSF55200">
    <property type="entry name" value="Translation initiation factor IF3, C-terminal domain"/>
    <property type="match status" value="1"/>
</dbReference>
<dbReference type="SUPFAM" id="SSF54364">
    <property type="entry name" value="Translation initiation factor IF3, N-terminal domain"/>
    <property type="match status" value="1"/>
</dbReference>
<dbReference type="PROSITE" id="PS00938">
    <property type="entry name" value="IF3"/>
    <property type="match status" value="1"/>
</dbReference>
<reference key="1">
    <citation type="journal article" date="2007" name="PLoS ONE">
        <title>Molecular correlates of host specialization in Staphylococcus aureus.</title>
        <authorList>
            <person name="Herron-Olson L."/>
            <person name="Fitzgerald J.R."/>
            <person name="Musser J.M."/>
            <person name="Kapur V."/>
        </authorList>
    </citation>
    <scope>NUCLEOTIDE SEQUENCE [LARGE SCALE GENOMIC DNA]</scope>
    <source>
        <strain>bovine RF122 / ET3-1</strain>
    </source>
</reference>
<keyword id="KW-0963">Cytoplasm</keyword>
<keyword id="KW-0396">Initiation factor</keyword>
<keyword id="KW-0648">Protein biosynthesis</keyword>
<accession>Q2YTA9</accession>
<protein>
    <recommendedName>
        <fullName evidence="1">Translation initiation factor IF-3</fullName>
    </recommendedName>
</protein>
<organism>
    <name type="scientific">Staphylococcus aureus (strain bovine RF122 / ET3-1)</name>
    <dbReference type="NCBI Taxonomy" id="273036"/>
    <lineage>
        <taxon>Bacteria</taxon>
        <taxon>Bacillati</taxon>
        <taxon>Bacillota</taxon>
        <taxon>Bacilli</taxon>
        <taxon>Bacillales</taxon>
        <taxon>Staphylococcaceae</taxon>
        <taxon>Staphylococcus</taxon>
    </lineage>
</organism>
<gene>
    <name evidence="1" type="primary">infC</name>
    <name type="ordered locus">SAB1540c</name>
</gene>
<proteinExistence type="inferred from homology"/>
<evidence type="ECO:0000255" key="1">
    <source>
        <dbReference type="HAMAP-Rule" id="MF_00080"/>
    </source>
</evidence>
<feature type="chain" id="PRO_1000004568" description="Translation initiation factor IF-3">
    <location>
        <begin position="1"/>
        <end position="175"/>
    </location>
</feature>
<name>IF3_STAAB</name>
<sequence length="175" mass="20214">MSTIAKDQTQINDKIRAKELRLIGQDGEQIGVKSKREALEMAERVDLDLVVVAPNAKPPVARIMDYGKFKFEQQKKEKEMKKKQKIINVKEIRLSPTIEEHDFQTKLKNGRKFLTKGDKCKVSIRFRGRAITHKEIGQRVLEKYADECKDIATVEQKPKMDGRQMFIMLAPTAEK</sequence>